<feature type="chain" id="PRO_1000165574" description="Small ribosomal subunit protein uS11">
    <location>
        <begin position="1"/>
        <end position="127"/>
    </location>
</feature>
<proteinExistence type="inferred from homology"/>
<reference key="1">
    <citation type="journal article" date="2010" name="Genome Biol.">
        <title>Structure and dynamics of the pan-genome of Streptococcus pneumoniae and closely related species.</title>
        <authorList>
            <person name="Donati C."/>
            <person name="Hiller N.L."/>
            <person name="Tettelin H."/>
            <person name="Muzzi A."/>
            <person name="Croucher N.J."/>
            <person name="Angiuoli S.V."/>
            <person name="Oggioni M."/>
            <person name="Dunning Hotopp J.C."/>
            <person name="Hu F.Z."/>
            <person name="Riley D.R."/>
            <person name="Covacci A."/>
            <person name="Mitchell T.J."/>
            <person name="Bentley S.D."/>
            <person name="Kilian M."/>
            <person name="Ehrlich G.D."/>
            <person name="Rappuoli R."/>
            <person name="Moxon E.R."/>
            <person name="Masignani V."/>
        </authorList>
    </citation>
    <scope>NUCLEOTIDE SEQUENCE [LARGE SCALE GENOMIC DNA]</scope>
    <source>
        <strain>Taiwan19F-14</strain>
    </source>
</reference>
<protein>
    <recommendedName>
        <fullName evidence="1">Small ribosomal subunit protein uS11</fullName>
    </recommendedName>
    <alternativeName>
        <fullName evidence="2">30S ribosomal protein S11</fullName>
    </alternativeName>
</protein>
<comment type="function">
    <text evidence="1">Located on the platform of the 30S subunit, it bridges several disparate RNA helices of the 16S rRNA. Forms part of the Shine-Dalgarno cleft in the 70S ribosome.</text>
</comment>
<comment type="subunit">
    <text evidence="1">Part of the 30S ribosomal subunit. Interacts with proteins S7 and S18. Binds to IF-3.</text>
</comment>
<comment type="similarity">
    <text evidence="1">Belongs to the universal ribosomal protein uS11 family.</text>
</comment>
<organism>
    <name type="scientific">Streptococcus pneumoniae (strain Taiwan19F-14)</name>
    <dbReference type="NCBI Taxonomy" id="487213"/>
    <lineage>
        <taxon>Bacteria</taxon>
        <taxon>Bacillati</taxon>
        <taxon>Bacillota</taxon>
        <taxon>Bacilli</taxon>
        <taxon>Lactobacillales</taxon>
        <taxon>Streptococcaceae</taxon>
        <taxon>Streptococcus</taxon>
    </lineage>
</organism>
<gene>
    <name evidence="1" type="primary">rpsK</name>
    <name type="ordered locus">SPT_0281</name>
</gene>
<sequence>MAKPTRKRRVKKNIESGIAHIHATFNNTIVMITDVHGNAIAWSSAGALGFKGSRKSTPFAAQMASEAAAKSAQEHGLKSVEVTVKGPGSGRESAIRALAAAGLEVTAIRDVTPVPHNGARPPKRRRV</sequence>
<name>RS11_STRZT</name>
<dbReference type="EMBL" id="CP000921">
    <property type="protein sequence ID" value="ACO24024.1"/>
    <property type="molecule type" value="Genomic_DNA"/>
</dbReference>
<dbReference type="RefSeq" id="WP_001118385.1">
    <property type="nucleotide sequence ID" value="NC_012469.1"/>
</dbReference>
<dbReference type="SMR" id="C1CPB3"/>
<dbReference type="GeneID" id="93964226"/>
<dbReference type="KEGG" id="snt:SPT_0281"/>
<dbReference type="HOGENOM" id="CLU_072439_5_0_9"/>
<dbReference type="GO" id="GO:1990904">
    <property type="term" value="C:ribonucleoprotein complex"/>
    <property type="evidence" value="ECO:0007669"/>
    <property type="project" value="UniProtKB-KW"/>
</dbReference>
<dbReference type="GO" id="GO:0005840">
    <property type="term" value="C:ribosome"/>
    <property type="evidence" value="ECO:0007669"/>
    <property type="project" value="UniProtKB-KW"/>
</dbReference>
<dbReference type="GO" id="GO:0019843">
    <property type="term" value="F:rRNA binding"/>
    <property type="evidence" value="ECO:0007669"/>
    <property type="project" value="UniProtKB-UniRule"/>
</dbReference>
<dbReference type="GO" id="GO:0003735">
    <property type="term" value="F:structural constituent of ribosome"/>
    <property type="evidence" value="ECO:0007669"/>
    <property type="project" value="InterPro"/>
</dbReference>
<dbReference type="GO" id="GO:0006412">
    <property type="term" value="P:translation"/>
    <property type="evidence" value="ECO:0007669"/>
    <property type="project" value="UniProtKB-UniRule"/>
</dbReference>
<dbReference type="FunFam" id="3.30.420.80:FF:000001">
    <property type="entry name" value="30S ribosomal protein S11"/>
    <property type="match status" value="1"/>
</dbReference>
<dbReference type="Gene3D" id="3.30.420.80">
    <property type="entry name" value="Ribosomal protein S11"/>
    <property type="match status" value="1"/>
</dbReference>
<dbReference type="HAMAP" id="MF_01310">
    <property type="entry name" value="Ribosomal_uS11"/>
    <property type="match status" value="1"/>
</dbReference>
<dbReference type="InterPro" id="IPR001971">
    <property type="entry name" value="Ribosomal_uS11"/>
</dbReference>
<dbReference type="InterPro" id="IPR019981">
    <property type="entry name" value="Ribosomal_uS11_bac-type"/>
</dbReference>
<dbReference type="InterPro" id="IPR018102">
    <property type="entry name" value="Ribosomal_uS11_CS"/>
</dbReference>
<dbReference type="InterPro" id="IPR036967">
    <property type="entry name" value="Ribosomal_uS11_sf"/>
</dbReference>
<dbReference type="NCBIfam" id="NF003698">
    <property type="entry name" value="PRK05309.1"/>
    <property type="match status" value="1"/>
</dbReference>
<dbReference type="NCBIfam" id="TIGR03632">
    <property type="entry name" value="uS11_bact"/>
    <property type="match status" value="1"/>
</dbReference>
<dbReference type="PANTHER" id="PTHR11759">
    <property type="entry name" value="40S RIBOSOMAL PROTEIN S14/30S RIBOSOMAL PROTEIN S11"/>
    <property type="match status" value="1"/>
</dbReference>
<dbReference type="Pfam" id="PF00411">
    <property type="entry name" value="Ribosomal_S11"/>
    <property type="match status" value="1"/>
</dbReference>
<dbReference type="PIRSF" id="PIRSF002131">
    <property type="entry name" value="Ribosomal_S11"/>
    <property type="match status" value="1"/>
</dbReference>
<dbReference type="SUPFAM" id="SSF53137">
    <property type="entry name" value="Translational machinery components"/>
    <property type="match status" value="1"/>
</dbReference>
<dbReference type="PROSITE" id="PS00054">
    <property type="entry name" value="RIBOSOMAL_S11"/>
    <property type="match status" value="1"/>
</dbReference>
<evidence type="ECO:0000255" key="1">
    <source>
        <dbReference type="HAMAP-Rule" id="MF_01310"/>
    </source>
</evidence>
<evidence type="ECO:0000305" key="2"/>
<accession>C1CPB3</accession>
<keyword id="KW-0687">Ribonucleoprotein</keyword>
<keyword id="KW-0689">Ribosomal protein</keyword>
<keyword id="KW-0694">RNA-binding</keyword>
<keyword id="KW-0699">rRNA-binding</keyword>